<feature type="chain" id="PRO_0000263597" description="Small ribosomal subunit protein uS12">
    <location>
        <begin position="1"/>
        <end position="137"/>
    </location>
</feature>
<feature type="region of interest" description="Disordered" evidence="3">
    <location>
        <begin position="1"/>
        <end position="21"/>
    </location>
</feature>
<feature type="region of interest" description="Disordered" evidence="3">
    <location>
        <begin position="33"/>
        <end position="57"/>
    </location>
</feature>
<feature type="modified residue" description="3-methylthioaspartic acid" evidence="1">
    <location>
        <position position="102"/>
    </location>
</feature>
<dbReference type="EMBL" id="CP000260">
    <property type="protein sequence ID" value="ABF33295.1"/>
    <property type="molecule type" value="Genomic_DNA"/>
</dbReference>
<dbReference type="RefSeq" id="WP_002986049.1">
    <property type="nucleotide sequence ID" value="NZ_CVUH01000002.1"/>
</dbReference>
<dbReference type="SMR" id="Q1JIM8"/>
<dbReference type="GeneID" id="69900197"/>
<dbReference type="KEGG" id="sph:MGAS10270_Spy0230"/>
<dbReference type="HOGENOM" id="CLU_104295_1_2_9"/>
<dbReference type="Proteomes" id="UP000002436">
    <property type="component" value="Chromosome"/>
</dbReference>
<dbReference type="GO" id="GO:0015935">
    <property type="term" value="C:small ribosomal subunit"/>
    <property type="evidence" value="ECO:0007669"/>
    <property type="project" value="InterPro"/>
</dbReference>
<dbReference type="GO" id="GO:0019843">
    <property type="term" value="F:rRNA binding"/>
    <property type="evidence" value="ECO:0007669"/>
    <property type="project" value="UniProtKB-UniRule"/>
</dbReference>
<dbReference type="GO" id="GO:0003735">
    <property type="term" value="F:structural constituent of ribosome"/>
    <property type="evidence" value="ECO:0007669"/>
    <property type="project" value="InterPro"/>
</dbReference>
<dbReference type="GO" id="GO:0000049">
    <property type="term" value="F:tRNA binding"/>
    <property type="evidence" value="ECO:0007669"/>
    <property type="project" value="UniProtKB-UniRule"/>
</dbReference>
<dbReference type="GO" id="GO:0006412">
    <property type="term" value="P:translation"/>
    <property type="evidence" value="ECO:0007669"/>
    <property type="project" value="UniProtKB-UniRule"/>
</dbReference>
<dbReference type="CDD" id="cd03368">
    <property type="entry name" value="Ribosomal_S12"/>
    <property type="match status" value="1"/>
</dbReference>
<dbReference type="FunFam" id="2.40.50.140:FF:000001">
    <property type="entry name" value="30S ribosomal protein S12"/>
    <property type="match status" value="1"/>
</dbReference>
<dbReference type="Gene3D" id="2.40.50.140">
    <property type="entry name" value="Nucleic acid-binding proteins"/>
    <property type="match status" value="1"/>
</dbReference>
<dbReference type="HAMAP" id="MF_00403_B">
    <property type="entry name" value="Ribosomal_uS12_B"/>
    <property type="match status" value="1"/>
</dbReference>
<dbReference type="InterPro" id="IPR012340">
    <property type="entry name" value="NA-bd_OB-fold"/>
</dbReference>
<dbReference type="InterPro" id="IPR006032">
    <property type="entry name" value="Ribosomal_uS12"/>
</dbReference>
<dbReference type="InterPro" id="IPR005679">
    <property type="entry name" value="Ribosomal_uS12_bac"/>
</dbReference>
<dbReference type="NCBIfam" id="TIGR00981">
    <property type="entry name" value="rpsL_bact"/>
    <property type="match status" value="1"/>
</dbReference>
<dbReference type="PANTHER" id="PTHR11652">
    <property type="entry name" value="30S RIBOSOMAL PROTEIN S12 FAMILY MEMBER"/>
    <property type="match status" value="1"/>
</dbReference>
<dbReference type="Pfam" id="PF00164">
    <property type="entry name" value="Ribosom_S12_S23"/>
    <property type="match status" value="1"/>
</dbReference>
<dbReference type="PRINTS" id="PR01034">
    <property type="entry name" value="RIBOSOMALS12"/>
</dbReference>
<dbReference type="SUPFAM" id="SSF50249">
    <property type="entry name" value="Nucleic acid-binding proteins"/>
    <property type="match status" value="1"/>
</dbReference>
<dbReference type="PROSITE" id="PS00055">
    <property type="entry name" value="RIBOSOMAL_S12"/>
    <property type="match status" value="1"/>
</dbReference>
<reference key="1">
    <citation type="journal article" date="2006" name="Proc. Natl. Acad. Sci. U.S.A.">
        <title>Molecular genetic anatomy of inter- and intraserotype variation in the human bacterial pathogen group A Streptococcus.</title>
        <authorList>
            <person name="Beres S.B."/>
            <person name="Richter E.W."/>
            <person name="Nagiec M.J."/>
            <person name="Sumby P."/>
            <person name="Porcella S.F."/>
            <person name="DeLeo F.R."/>
            <person name="Musser J.M."/>
        </authorList>
    </citation>
    <scope>NUCLEOTIDE SEQUENCE [LARGE SCALE GENOMIC DNA]</scope>
    <source>
        <strain>MGAS10270</strain>
    </source>
</reference>
<evidence type="ECO:0000250" key="1"/>
<evidence type="ECO:0000255" key="2">
    <source>
        <dbReference type="HAMAP-Rule" id="MF_00403"/>
    </source>
</evidence>
<evidence type="ECO:0000256" key="3">
    <source>
        <dbReference type="SAM" id="MobiDB-lite"/>
    </source>
</evidence>
<evidence type="ECO:0000305" key="4"/>
<proteinExistence type="inferred from homology"/>
<organism>
    <name type="scientific">Streptococcus pyogenes serotype M2 (strain MGAS10270)</name>
    <dbReference type="NCBI Taxonomy" id="370552"/>
    <lineage>
        <taxon>Bacteria</taxon>
        <taxon>Bacillati</taxon>
        <taxon>Bacillota</taxon>
        <taxon>Bacilli</taxon>
        <taxon>Lactobacillales</taxon>
        <taxon>Streptococcaceae</taxon>
        <taxon>Streptococcus</taxon>
    </lineage>
</organism>
<accession>Q1JIM8</accession>
<protein>
    <recommendedName>
        <fullName evidence="2">Small ribosomal subunit protein uS12</fullName>
    </recommendedName>
    <alternativeName>
        <fullName evidence="4">30S ribosomal protein S12</fullName>
    </alternativeName>
</protein>
<name>RS12_STRPD</name>
<gene>
    <name evidence="2" type="primary">rpsL</name>
    <name type="ordered locus">MGAS10270_Spy0230</name>
</gene>
<keyword id="KW-0488">Methylation</keyword>
<keyword id="KW-0687">Ribonucleoprotein</keyword>
<keyword id="KW-0689">Ribosomal protein</keyword>
<keyword id="KW-0694">RNA-binding</keyword>
<keyword id="KW-0699">rRNA-binding</keyword>
<keyword id="KW-0820">tRNA-binding</keyword>
<comment type="function">
    <text evidence="2">With S4 and S5 plays an important role in translational accuracy.</text>
</comment>
<comment type="function">
    <text evidence="2">Interacts with and stabilizes bases of the 16S rRNA that are involved in tRNA selection in the A site and with the mRNA backbone. Located at the interface of the 30S and 50S subunits, it traverses the body of the 30S subunit contacting proteins on the other side and probably holding the rRNA structure together. The combined cluster of proteins S8, S12 and S17 appears to hold together the shoulder and platform of the 30S subunit.</text>
</comment>
<comment type="subunit">
    <text evidence="2">Part of the 30S ribosomal subunit. Contacts proteins S8 and S17. May interact with IF1 in the 30S initiation complex.</text>
</comment>
<comment type="similarity">
    <text evidence="2">Belongs to the universal ribosomal protein uS12 family.</text>
</comment>
<sequence>MPTINQLVRKPRKSKIEKSDSPALNIGYNSHKKVQTKMAAPQKRGVATRVGTMTPKKPNSALRKFARVRLSNLIEVTAYIPGIGHNLQEHSVVLIRGGRVKDLPGVRYHIVRGALDTAGVADRKQGRSKYGAKRPKG</sequence>